<organism>
    <name type="scientific">Arabidopsis thaliana</name>
    <name type="common">Mouse-ear cress</name>
    <dbReference type="NCBI Taxonomy" id="3702"/>
    <lineage>
        <taxon>Eukaryota</taxon>
        <taxon>Viridiplantae</taxon>
        <taxon>Streptophyta</taxon>
        <taxon>Embryophyta</taxon>
        <taxon>Tracheophyta</taxon>
        <taxon>Spermatophyta</taxon>
        <taxon>Magnoliopsida</taxon>
        <taxon>eudicotyledons</taxon>
        <taxon>Gunneridae</taxon>
        <taxon>Pentapetalae</taxon>
        <taxon>rosids</taxon>
        <taxon>malvids</taxon>
        <taxon>Brassicales</taxon>
        <taxon>Brassicaceae</taxon>
        <taxon>Camelineae</taxon>
        <taxon>Arabidopsis</taxon>
    </lineage>
</organism>
<reference key="1">
    <citation type="journal article" date="2000" name="Nature">
        <title>Sequence and analysis of chromosome 3 of the plant Arabidopsis thaliana.</title>
        <authorList>
            <person name="Salanoubat M."/>
            <person name="Lemcke K."/>
            <person name="Rieger M."/>
            <person name="Ansorge W."/>
            <person name="Unseld M."/>
            <person name="Fartmann B."/>
            <person name="Valle G."/>
            <person name="Bloecker H."/>
            <person name="Perez-Alonso M."/>
            <person name="Obermaier B."/>
            <person name="Delseny M."/>
            <person name="Boutry M."/>
            <person name="Grivell L.A."/>
            <person name="Mache R."/>
            <person name="Puigdomenech P."/>
            <person name="De Simone V."/>
            <person name="Choisne N."/>
            <person name="Artiguenave F."/>
            <person name="Robert C."/>
            <person name="Brottier P."/>
            <person name="Wincker P."/>
            <person name="Cattolico L."/>
            <person name="Weissenbach J."/>
            <person name="Saurin W."/>
            <person name="Quetier F."/>
            <person name="Schaefer M."/>
            <person name="Mueller-Auer S."/>
            <person name="Gabel C."/>
            <person name="Fuchs M."/>
            <person name="Benes V."/>
            <person name="Wurmbach E."/>
            <person name="Drzonek H."/>
            <person name="Erfle H."/>
            <person name="Jordan N."/>
            <person name="Bangert S."/>
            <person name="Wiedelmann R."/>
            <person name="Kranz H."/>
            <person name="Voss H."/>
            <person name="Holland R."/>
            <person name="Brandt P."/>
            <person name="Nyakatura G."/>
            <person name="Vezzi A."/>
            <person name="D'Angelo M."/>
            <person name="Pallavicini A."/>
            <person name="Toppo S."/>
            <person name="Simionati B."/>
            <person name="Conrad A."/>
            <person name="Hornischer K."/>
            <person name="Kauer G."/>
            <person name="Loehnert T.-H."/>
            <person name="Nordsiek G."/>
            <person name="Reichelt J."/>
            <person name="Scharfe M."/>
            <person name="Schoen O."/>
            <person name="Bargues M."/>
            <person name="Terol J."/>
            <person name="Climent J."/>
            <person name="Navarro P."/>
            <person name="Collado C."/>
            <person name="Perez-Perez A."/>
            <person name="Ottenwaelder B."/>
            <person name="Duchemin D."/>
            <person name="Cooke R."/>
            <person name="Laudie M."/>
            <person name="Berger-Llauro C."/>
            <person name="Purnelle B."/>
            <person name="Masuy D."/>
            <person name="de Haan M."/>
            <person name="Maarse A.C."/>
            <person name="Alcaraz J.-P."/>
            <person name="Cottet A."/>
            <person name="Casacuberta E."/>
            <person name="Monfort A."/>
            <person name="Argiriou A."/>
            <person name="Flores M."/>
            <person name="Liguori R."/>
            <person name="Vitale D."/>
            <person name="Mannhaupt G."/>
            <person name="Haase D."/>
            <person name="Schoof H."/>
            <person name="Rudd S."/>
            <person name="Zaccaria P."/>
            <person name="Mewes H.-W."/>
            <person name="Mayer K.F.X."/>
            <person name="Kaul S."/>
            <person name="Town C.D."/>
            <person name="Koo H.L."/>
            <person name="Tallon L.J."/>
            <person name="Jenkins J."/>
            <person name="Rooney T."/>
            <person name="Rizzo M."/>
            <person name="Walts A."/>
            <person name="Utterback T."/>
            <person name="Fujii C.Y."/>
            <person name="Shea T.P."/>
            <person name="Creasy T.H."/>
            <person name="Haas B."/>
            <person name="Maiti R."/>
            <person name="Wu D."/>
            <person name="Peterson J."/>
            <person name="Van Aken S."/>
            <person name="Pai G."/>
            <person name="Militscher J."/>
            <person name="Sellers P."/>
            <person name="Gill J.E."/>
            <person name="Feldblyum T.V."/>
            <person name="Preuss D."/>
            <person name="Lin X."/>
            <person name="Nierman W.C."/>
            <person name="Salzberg S.L."/>
            <person name="White O."/>
            <person name="Venter J.C."/>
            <person name="Fraser C.M."/>
            <person name="Kaneko T."/>
            <person name="Nakamura Y."/>
            <person name="Sato S."/>
            <person name="Kato T."/>
            <person name="Asamizu E."/>
            <person name="Sasamoto S."/>
            <person name="Kimura T."/>
            <person name="Idesawa K."/>
            <person name="Kawashima K."/>
            <person name="Kishida Y."/>
            <person name="Kiyokawa C."/>
            <person name="Kohara M."/>
            <person name="Matsumoto M."/>
            <person name="Matsuno A."/>
            <person name="Muraki A."/>
            <person name="Nakayama S."/>
            <person name="Nakazaki N."/>
            <person name="Shinpo S."/>
            <person name="Takeuchi C."/>
            <person name="Wada T."/>
            <person name="Watanabe A."/>
            <person name="Yamada M."/>
            <person name="Yasuda M."/>
            <person name="Tabata S."/>
        </authorList>
    </citation>
    <scope>NUCLEOTIDE SEQUENCE [LARGE SCALE GENOMIC DNA]</scope>
    <source>
        <strain>cv. Columbia</strain>
    </source>
</reference>
<reference key="2">
    <citation type="journal article" date="2017" name="Plant J.">
        <title>Araport11: a complete reannotation of the Arabidopsis thaliana reference genome.</title>
        <authorList>
            <person name="Cheng C.Y."/>
            <person name="Krishnakumar V."/>
            <person name="Chan A.P."/>
            <person name="Thibaud-Nissen F."/>
            <person name="Schobel S."/>
            <person name="Town C.D."/>
        </authorList>
    </citation>
    <scope>GENOME REANNOTATION</scope>
    <source>
        <strain>cv. Columbia</strain>
    </source>
</reference>
<reference key="3">
    <citation type="journal article" date="2008" name="Plant Cell Physiol.">
        <title>Antagonistic jacalin-related lectins regulate the size of ER body-type beta-glucosidase complexes in Arabidopsis thaliana.</title>
        <authorList>
            <person name="Nagano A.J."/>
            <person name="Fukao Y."/>
            <person name="Fujiwara M."/>
            <person name="Nishimura M."/>
            <person name="Hara-Nishimura I."/>
        </authorList>
    </citation>
    <scope>GENE FAMILY</scope>
    <scope>NOMENCLATURE</scope>
</reference>
<dbReference type="EMBL" id="AL138659">
    <property type="protein sequence ID" value="CAB75456.1"/>
    <property type="molecule type" value="Genomic_DNA"/>
</dbReference>
<dbReference type="EMBL" id="CP002686">
    <property type="protein sequence ID" value="AEE79943.1"/>
    <property type="molecule type" value="Genomic_DNA"/>
</dbReference>
<dbReference type="PIR" id="T49300">
    <property type="entry name" value="T49300"/>
</dbReference>
<dbReference type="RefSeq" id="NP_191518.1">
    <property type="nucleotide sequence ID" value="NM_115821.1"/>
</dbReference>
<dbReference type="SMR" id="Q9M1A9"/>
<dbReference type="FunCoup" id="Q9M1A9">
    <property type="interactions" value="1"/>
</dbReference>
<dbReference type="iPTMnet" id="Q9M1A9"/>
<dbReference type="PaxDb" id="3702-AT3G59590.1"/>
<dbReference type="EnsemblPlants" id="AT3G59590.1">
    <property type="protein sequence ID" value="AT3G59590.1"/>
    <property type="gene ID" value="AT3G59590"/>
</dbReference>
<dbReference type="GeneID" id="825128"/>
<dbReference type="Gramene" id="AT3G59590.1">
    <property type="protein sequence ID" value="AT3G59590.1"/>
    <property type="gene ID" value="AT3G59590"/>
</dbReference>
<dbReference type="KEGG" id="ath:AT3G59590"/>
<dbReference type="Araport" id="AT3G59590"/>
<dbReference type="TAIR" id="AT3G59590"/>
<dbReference type="HOGENOM" id="CLU_034692_2_1_1"/>
<dbReference type="InParanoid" id="Q9M1A9"/>
<dbReference type="OMA" id="DEIMIAG"/>
<dbReference type="PhylomeDB" id="Q9M1A9"/>
<dbReference type="PRO" id="PR:Q9M1A9"/>
<dbReference type="Proteomes" id="UP000006548">
    <property type="component" value="Chromosome 3"/>
</dbReference>
<dbReference type="ExpressionAtlas" id="Q9M1A9">
    <property type="expression patterns" value="baseline"/>
</dbReference>
<dbReference type="GO" id="GO:0030246">
    <property type="term" value="F:carbohydrate binding"/>
    <property type="evidence" value="ECO:0007669"/>
    <property type="project" value="UniProtKB-KW"/>
</dbReference>
<dbReference type="Gene3D" id="2.100.10.30">
    <property type="entry name" value="Jacalin-like lectin domain"/>
    <property type="match status" value="1"/>
</dbReference>
<dbReference type="InterPro" id="IPR006527">
    <property type="entry name" value="F-box-assoc_dom_typ1"/>
</dbReference>
<dbReference type="InterPro" id="IPR017451">
    <property type="entry name" value="F-box-assoc_interact_dom"/>
</dbReference>
<dbReference type="InterPro" id="IPR001229">
    <property type="entry name" value="Jacalin-like_lectin_dom"/>
</dbReference>
<dbReference type="InterPro" id="IPR036404">
    <property type="entry name" value="Jacalin-like_lectin_dom_sf"/>
</dbReference>
<dbReference type="NCBIfam" id="TIGR01640">
    <property type="entry name" value="F_box_assoc_1"/>
    <property type="match status" value="1"/>
</dbReference>
<dbReference type="PANTHER" id="PTHR47293:SF66">
    <property type="entry name" value="JACALIN-RELATED LECTIN 11-RELATED"/>
    <property type="match status" value="1"/>
</dbReference>
<dbReference type="PANTHER" id="PTHR47293">
    <property type="entry name" value="JACALIN-RELATED LECTIN 3"/>
    <property type="match status" value="1"/>
</dbReference>
<dbReference type="Pfam" id="PF07734">
    <property type="entry name" value="FBA_1"/>
    <property type="match status" value="1"/>
</dbReference>
<dbReference type="Pfam" id="PF01419">
    <property type="entry name" value="Jacalin"/>
    <property type="match status" value="1"/>
</dbReference>
<dbReference type="SMART" id="SM00915">
    <property type="entry name" value="Jacalin"/>
    <property type="match status" value="1"/>
</dbReference>
<dbReference type="SUPFAM" id="SSF51101">
    <property type="entry name" value="Mannose-binding lectins"/>
    <property type="match status" value="1"/>
</dbReference>
<dbReference type="PROSITE" id="PS51752">
    <property type="entry name" value="JACALIN_LECTIN"/>
    <property type="match status" value="1"/>
</dbReference>
<accession>Q9M1A9</accession>
<comment type="similarity">
    <text evidence="1 2">Belongs to the jacalin lectin family.</text>
</comment>
<sequence length="454" mass="52023">MELSFKREKICSVEVNLDVPSIEVHSHNLPSYIPGYNGFFMTVEYCDGLVVYATENGIGICNPLLRQIRWIKSKVNYRYNGVGYDNSRPENHYKIFESCPYSDTTVKASITEFVSDAWISKPYEFAYDWDFMSSYSVSLNGALYWVAFHMASDDQFIQSFDFSTEKFEPYCLLPNKKCDPSNARSLAVFRGDRFSYLEQNYETRNIEIWVTKKEIKIENGKAVEWMNLMKVSVPKWSSLREKACIYIAKGDKFHEIIINDLVEYPTRHHRTYVPSLVPVPTFTMSNRSKTQQVESRFTPPRGIQASDGGNEWDDGIFHNVKKINVGVNDFDTVFVKFHYSKYNRIEAGAGHGNATTHNPDDEIMIAGGDYIEAVEGTYTESHITSITFRMRKGDMMPQYGRLNGTPFSLRGERGSKAIGFYGRSSGVHLTALGVHFSPPPLYYSFPNHSPVFNY</sequence>
<feature type="chain" id="PRO_0000430395" description="Jacalin-related lectin 37">
    <location>
        <begin position="1"/>
        <end position="454"/>
    </location>
</feature>
<feature type="domain" description="Jacalin-type lectin" evidence="1">
    <location>
        <begin position="295"/>
        <end position="438"/>
    </location>
</feature>
<proteinExistence type="inferred from homology"/>
<name>JAL37_ARATH</name>
<keyword id="KW-0430">Lectin</keyword>
<keyword id="KW-1185">Reference proteome</keyword>
<evidence type="ECO:0000255" key="1">
    <source>
        <dbReference type="PROSITE-ProRule" id="PRU01088"/>
    </source>
</evidence>
<evidence type="ECO:0000305" key="2"/>
<gene>
    <name type="primary">JAL37</name>
    <name type="ordered locus">At3g59590</name>
    <name type="ORF">T16L24.140</name>
</gene>
<protein>
    <recommendedName>
        <fullName>Jacalin-related lectin 37</fullName>
    </recommendedName>
</protein>